<proteinExistence type="inferred from homology"/>
<protein>
    <recommendedName>
        <fullName>Serine/threonine-protein kinase NLK</fullName>
        <ecNumber evidence="1">2.7.11.24</ecNumber>
    </recommendedName>
    <alternativeName>
        <fullName>Nemo-like kinase</fullName>
    </alternativeName>
</protein>
<keyword id="KW-0067">ATP-binding</keyword>
<keyword id="KW-0963">Cytoplasm</keyword>
<keyword id="KW-0418">Kinase</keyword>
<keyword id="KW-0460">Magnesium</keyword>
<keyword id="KW-0479">Metal-binding</keyword>
<keyword id="KW-0547">Nucleotide-binding</keyword>
<keyword id="KW-0539">Nucleus</keyword>
<keyword id="KW-0597">Phosphoprotein</keyword>
<keyword id="KW-1185">Reference proteome</keyword>
<keyword id="KW-0723">Serine/threonine-protein kinase</keyword>
<keyword id="KW-0804">Transcription</keyword>
<keyword id="KW-0805">Transcription regulation</keyword>
<keyword id="KW-0808">Transferase</keyword>
<keyword id="KW-0879">Wnt signaling pathway</keyword>
<evidence type="ECO:0000250" key="1">
    <source>
        <dbReference type="UniProtKB" id="O54949"/>
    </source>
</evidence>
<evidence type="ECO:0000250" key="2">
    <source>
        <dbReference type="UniProtKB" id="Q9UBE8"/>
    </source>
</evidence>
<evidence type="ECO:0000255" key="3">
    <source>
        <dbReference type="PROSITE-ProRule" id="PRU00159"/>
    </source>
</evidence>
<evidence type="ECO:0000255" key="4">
    <source>
        <dbReference type="PROSITE-ProRule" id="PRU10027"/>
    </source>
</evidence>
<evidence type="ECO:0000256" key="5">
    <source>
        <dbReference type="SAM" id="MobiDB-lite"/>
    </source>
</evidence>
<evidence type="ECO:0000305" key="6"/>
<organism>
    <name type="scientific">Rattus norvegicus</name>
    <name type="common">Rat</name>
    <dbReference type="NCBI Taxonomy" id="10116"/>
    <lineage>
        <taxon>Eukaryota</taxon>
        <taxon>Metazoa</taxon>
        <taxon>Chordata</taxon>
        <taxon>Craniata</taxon>
        <taxon>Vertebrata</taxon>
        <taxon>Euteleostomi</taxon>
        <taxon>Mammalia</taxon>
        <taxon>Eutheria</taxon>
        <taxon>Euarchontoglires</taxon>
        <taxon>Glires</taxon>
        <taxon>Rodentia</taxon>
        <taxon>Myomorpha</taxon>
        <taxon>Muroidea</taxon>
        <taxon>Muridae</taxon>
        <taxon>Murinae</taxon>
        <taxon>Rattus</taxon>
    </lineage>
</organism>
<comment type="function">
    <text evidence="2">Serine/threonine-protein kinase that regulates a number of transcription factors with key roles in cell fate determination. Positive effector of the non-canonical Wnt signaling pathway, acting downstream of WNT5A, MAP3K7/TAK1 and HIPK2. Negative regulator of the canonical Wnt/beta-catenin signaling pathway. Binds to and phosphorylates TCF7L2/TCF4 and LEF1, promoting the dissociation of the TCF7L2/LEF1/beta-catenin complex from DNA, as well as the ubiquitination and subsequent proteolysis of LEF1. Together these effects inhibit the transcriptional activation of canonical Wnt/beta-catenin target genes. Negative regulator of the Notch signaling pathway. Binds to and phosphorylates NOTCH1, thereby preventing the formation of a transcriptionally active ternary complex of NOTCH1, RBPJ/RBPSUH and MAML1. Negative regulator of the MYB family of transcription factors. Phosphorylation of MYB leads to its subsequent proteolysis while phosphorylation of MYBL1 and MYBL2 inhibits their interaction with the coactivator CREBBP. Other transcription factors may also be inhibited by direct phosphorylation of CREBBP itself. Acts downstream of IL6 and MAP3K7/TAK1 to phosphorylate STAT3, which is in turn required for activation of NLK by MAP3K7/TAK1. Upon IL1B stimulus, cooperates with ATF5 to activate the transactivation activity of C/EBP subfamily members. Phosphorylates ATF5 but also stabilizes ATF5 protein levels in a kinase-independent manner. Acts as an inhibitor of the mTORC1 complex in response to osmotic stress by mediating phosphorylation of RPTOR, thereby preventing recruitment of the mTORC1 complex to lysosomes.</text>
</comment>
<comment type="catalytic activity">
    <reaction evidence="1">
        <text>L-seryl-[protein] + ATP = O-phospho-L-seryl-[protein] + ADP + H(+)</text>
        <dbReference type="Rhea" id="RHEA:17989"/>
        <dbReference type="Rhea" id="RHEA-COMP:9863"/>
        <dbReference type="Rhea" id="RHEA-COMP:11604"/>
        <dbReference type="ChEBI" id="CHEBI:15378"/>
        <dbReference type="ChEBI" id="CHEBI:29999"/>
        <dbReference type="ChEBI" id="CHEBI:30616"/>
        <dbReference type="ChEBI" id="CHEBI:83421"/>
        <dbReference type="ChEBI" id="CHEBI:456216"/>
        <dbReference type="EC" id="2.7.11.24"/>
    </reaction>
</comment>
<comment type="catalytic activity">
    <reaction evidence="1">
        <text>L-threonyl-[protein] + ATP = O-phospho-L-threonyl-[protein] + ADP + H(+)</text>
        <dbReference type="Rhea" id="RHEA:46608"/>
        <dbReference type="Rhea" id="RHEA-COMP:11060"/>
        <dbReference type="Rhea" id="RHEA-COMP:11605"/>
        <dbReference type="ChEBI" id="CHEBI:15378"/>
        <dbReference type="ChEBI" id="CHEBI:30013"/>
        <dbReference type="ChEBI" id="CHEBI:30616"/>
        <dbReference type="ChEBI" id="CHEBI:61977"/>
        <dbReference type="ChEBI" id="CHEBI:456216"/>
        <dbReference type="EC" id="2.7.11.24"/>
    </reaction>
</comment>
<comment type="cofactor">
    <cofactor evidence="1">
        <name>Mg(2+)</name>
        <dbReference type="ChEBI" id="CHEBI:18420"/>
    </cofactor>
</comment>
<comment type="activity regulation">
    <text evidence="1">Activated by the non-canonical Wnt signaling pathway, in which WNT5A leads to activation of MAP3K7/TAK1 and HIPK2, which subsequently phosphorylates and activates this protein. Activated by dimerization and subsequent intermolecular autophosphorylation on Thr-298. Other cytokines such as IL6 may also activate this regulatory circuit (By similarity).</text>
</comment>
<comment type="subunit">
    <text evidence="1 2">Homodimer. Homodimerization is required for intermolecular autophosphorylation, kinase activation and nuclear localization (By similarity). May interact with components of cullin-RING-based SCF (SKP1-CUL1-F-box protein) E3 ubiquitin-protein ligase complexes (By similarity). Interacts with LEF1, MEF2A, MYBL1 and MYBL2 (By similarity). Interacts with the upstream activating kinases HIPK2 and MAP3K7/TAK1. Interaction with MAP3K7/TAK1 seems to be indirect, and may be mediated by other proteins such as STAT3, TAB1 and TAB2. Interacts with and phosphorylates a number of transcription factors including FOXO1, FOXO3, FOXO4, MYB, NOTCH1 and TCF7L2/TCF4. Interacts with DAPK3/ZIPK, and this interaction may disrupt interaction with transcription factors such as TCF7L2/TCF4. Forms a transcriptional repressor complex with CHD7, PPARG and SETDB1. Interacts with RNF138/NARF (By similarity). Interacts with ATF5; the interaction stabilizes ATF5 at the protein level in a kinase-independent manner (By similarity).</text>
</comment>
<comment type="subcellular location">
    <subcellularLocation>
        <location evidence="1">Nucleus</location>
    </subcellularLocation>
    <subcellularLocation>
        <location evidence="1">Cytoplasm</location>
    </subcellularLocation>
    <text evidence="1">Predominantly nuclear. A smaller fraction is cytoplasmic.</text>
</comment>
<comment type="domain">
    <text evidence="1">Contains a TQE activation loop motif in which autophosphorylation of the threonine residue (Thr-298) is sufficient for kinase activation. This mode of activation contrasts with that of classical MAP kinases, which contain a TXY activation loop motif in which phosphorylation of both the threonine and tyrosine residues is required for kinase activation.</text>
</comment>
<comment type="PTM">
    <text evidence="1">Phosphorylated on Thr-298. Intermolecular autophosphorylation on Thr-298 activates the enzyme.</text>
</comment>
<comment type="similarity">
    <text evidence="6">Belongs to the protein kinase superfamily. CMGC Ser/Thr protein kinase family. MAP kinase subfamily.</text>
</comment>
<gene>
    <name type="primary">Nlk</name>
</gene>
<dbReference type="EC" id="2.7.11.24" evidence="1"/>
<dbReference type="EMBL" id="AABR03073152">
    <property type="status" value="NOT_ANNOTATED_CDS"/>
    <property type="molecule type" value="Genomic_DNA"/>
</dbReference>
<dbReference type="RefSeq" id="NP_001178853.1">
    <property type="nucleotide sequence ID" value="NM_001191924.3"/>
</dbReference>
<dbReference type="RefSeq" id="XP_038942542.1">
    <property type="nucleotide sequence ID" value="XM_039086614.2"/>
</dbReference>
<dbReference type="SMR" id="D3ZSZ3"/>
<dbReference type="FunCoup" id="D3ZSZ3">
    <property type="interactions" value="5022"/>
</dbReference>
<dbReference type="STRING" id="10116.ENSRNOP00000011726"/>
<dbReference type="iPTMnet" id="D3ZSZ3"/>
<dbReference type="PhosphoSitePlus" id="D3ZSZ3"/>
<dbReference type="jPOST" id="D3ZSZ3"/>
<dbReference type="PaxDb" id="10116-ENSRNOP00000011726"/>
<dbReference type="PeptideAtlas" id="D3ZSZ3"/>
<dbReference type="Ensembl" id="ENSRNOT00000011726.7">
    <property type="protein sequence ID" value="ENSRNOP00000011726.5"/>
    <property type="gene ID" value="ENSRNOG00000008704.7"/>
</dbReference>
<dbReference type="GeneID" id="497961"/>
<dbReference type="KEGG" id="rno:497961"/>
<dbReference type="AGR" id="RGD:1561602"/>
<dbReference type="CTD" id="51701"/>
<dbReference type="RGD" id="1561602">
    <property type="gene designation" value="Nlk"/>
</dbReference>
<dbReference type="eggNOG" id="KOG0664">
    <property type="taxonomic scope" value="Eukaryota"/>
</dbReference>
<dbReference type="GeneTree" id="ENSGT00940000158363"/>
<dbReference type="HOGENOM" id="CLU_000288_133_2_1"/>
<dbReference type="InParanoid" id="D3ZSZ3"/>
<dbReference type="OMA" id="QNMTHEV"/>
<dbReference type="OrthoDB" id="192887at2759"/>
<dbReference type="PhylomeDB" id="D3ZSZ3"/>
<dbReference type="TreeFam" id="TF315210"/>
<dbReference type="Reactome" id="R-RNO-4086398">
    <property type="pathway name" value="Ca2+ pathway"/>
</dbReference>
<dbReference type="PRO" id="PR:D3ZSZ3"/>
<dbReference type="Proteomes" id="UP000002494">
    <property type="component" value="Chromosome 10"/>
</dbReference>
<dbReference type="Bgee" id="ENSRNOG00000008704">
    <property type="expression patterns" value="Expressed in frontal cortex and 19 other cell types or tissues"/>
</dbReference>
<dbReference type="GO" id="GO:0005737">
    <property type="term" value="C:cytoplasm"/>
    <property type="evidence" value="ECO:0000318"/>
    <property type="project" value="GO_Central"/>
</dbReference>
<dbReference type="GO" id="GO:0005634">
    <property type="term" value="C:nucleus"/>
    <property type="evidence" value="ECO:0000266"/>
    <property type="project" value="RGD"/>
</dbReference>
<dbReference type="GO" id="GO:0005524">
    <property type="term" value="F:ATP binding"/>
    <property type="evidence" value="ECO:0000266"/>
    <property type="project" value="RGD"/>
</dbReference>
<dbReference type="GO" id="GO:0140297">
    <property type="term" value="F:DNA-binding transcription factor binding"/>
    <property type="evidence" value="ECO:0000266"/>
    <property type="project" value="RGD"/>
</dbReference>
<dbReference type="GO" id="GO:0000287">
    <property type="term" value="F:magnesium ion binding"/>
    <property type="evidence" value="ECO:0000266"/>
    <property type="project" value="RGD"/>
</dbReference>
<dbReference type="GO" id="GO:0004707">
    <property type="term" value="F:MAP kinase activity"/>
    <property type="evidence" value="ECO:0000266"/>
    <property type="project" value="RGD"/>
</dbReference>
<dbReference type="GO" id="GO:0004672">
    <property type="term" value="F:protein kinase activity"/>
    <property type="evidence" value="ECO:0000266"/>
    <property type="project" value="RGD"/>
</dbReference>
<dbReference type="GO" id="GO:0106310">
    <property type="term" value="F:protein serine kinase activity"/>
    <property type="evidence" value="ECO:0007669"/>
    <property type="project" value="RHEA"/>
</dbReference>
<dbReference type="GO" id="GO:0004674">
    <property type="term" value="F:protein serine/threonine kinase activity"/>
    <property type="evidence" value="ECO:0000250"/>
    <property type="project" value="UniProtKB"/>
</dbReference>
<dbReference type="GO" id="GO:0042169">
    <property type="term" value="F:SH2 domain binding"/>
    <property type="evidence" value="ECO:0000266"/>
    <property type="project" value="RGD"/>
</dbReference>
<dbReference type="GO" id="GO:0031625">
    <property type="term" value="F:ubiquitin protein ligase binding"/>
    <property type="evidence" value="ECO:0000266"/>
    <property type="project" value="RGD"/>
</dbReference>
<dbReference type="GO" id="GO:0071470">
    <property type="term" value="P:cellular response to osmotic stress"/>
    <property type="evidence" value="ECO:0000266"/>
    <property type="project" value="RGD"/>
</dbReference>
<dbReference type="GO" id="GO:0035556">
    <property type="term" value="P:intracellular signal transduction"/>
    <property type="evidence" value="ECO:0000266"/>
    <property type="project" value="RGD"/>
</dbReference>
<dbReference type="GO" id="GO:1904262">
    <property type="term" value="P:negative regulation of TORC1 signaling"/>
    <property type="evidence" value="ECO:0000250"/>
    <property type="project" value="UniProtKB"/>
</dbReference>
<dbReference type="GO" id="GO:0030178">
    <property type="term" value="P:negative regulation of Wnt signaling pathway"/>
    <property type="evidence" value="ECO:0000266"/>
    <property type="project" value="RGD"/>
</dbReference>
<dbReference type="GO" id="GO:1904894">
    <property type="term" value="P:positive regulation of receptor signaling pathway via STAT"/>
    <property type="evidence" value="ECO:0000266"/>
    <property type="project" value="RGD"/>
</dbReference>
<dbReference type="GO" id="GO:0050821">
    <property type="term" value="P:protein stabilization"/>
    <property type="evidence" value="ECO:0000250"/>
    <property type="project" value="UniProtKB"/>
</dbReference>
<dbReference type="GO" id="GO:0006355">
    <property type="term" value="P:regulation of DNA-templated transcription"/>
    <property type="evidence" value="ECO:0000266"/>
    <property type="project" value="RGD"/>
</dbReference>
<dbReference type="GO" id="GO:0007179">
    <property type="term" value="P:transforming growth factor beta receptor signaling pathway"/>
    <property type="evidence" value="ECO:0000266"/>
    <property type="project" value="RGD"/>
</dbReference>
<dbReference type="GO" id="GO:0016055">
    <property type="term" value="P:Wnt signaling pathway"/>
    <property type="evidence" value="ECO:0007669"/>
    <property type="project" value="UniProtKB-KW"/>
</dbReference>
<dbReference type="CDD" id="cd07853">
    <property type="entry name" value="STKc_NLK"/>
    <property type="match status" value="1"/>
</dbReference>
<dbReference type="FunFam" id="1.10.510.10:FF:000162">
    <property type="entry name" value="Mitogen-activated protein kinase"/>
    <property type="match status" value="1"/>
</dbReference>
<dbReference type="FunFam" id="3.30.200.20:FF:000164">
    <property type="entry name" value="Mitogen-activated protein kinase"/>
    <property type="match status" value="1"/>
</dbReference>
<dbReference type="Gene3D" id="3.30.200.20">
    <property type="entry name" value="Phosphorylase Kinase, domain 1"/>
    <property type="match status" value="1"/>
</dbReference>
<dbReference type="Gene3D" id="1.10.510.10">
    <property type="entry name" value="Transferase(Phosphotransferase) domain 1"/>
    <property type="match status" value="1"/>
</dbReference>
<dbReference type="InterPro" id="IPR011009">
    <property type="entry name" value="Kinase-like_dom_sf"/>
</dbReference>
<dbReference type="InterPro" id="IPR050117">
    <property type="entry name" value="MAP_kinase"/>
</dbReference>
<dbReference type="InterPro" id="IPR003527">
    <property type="entry name" value="MAP_kinase_CS"/>
</dbReference>
<dbReference type="InterPro" id="IPR000719">
    <property type="entry name" value="Prot_kinase_dom"/>
</dbReference>
<dbReference type="InterPro" id="IPR017441">
    <property type="entry name" value="Protein_kinase_ATP_BS"/>
</dbReference>
<dbReference type="InterPro" id="IPR008271">
    <property type="entry name" value="Ser/Thr_kinase_AS"/>
</dbReference>
<dbReference type="PANTHER" id="PTHR24055">
    <property type="entry name" value="MITOGEN-ACTIVATED PROTEIN KINASE"/>
    <property type="match status" value="1"/>
</dbReference>
<dbReference type="Pfam" id="PF00069">
    <property type="entry name" value="Pkinase"/>
    <property type="match status" value="1"/>
</dbReference>
<dbReference type="SMART" id="SM00220">
    <property type="entry name" value="S_TKc"/>
    <property type="match status" value="1"/>
</dbReference>
<dbReference type="SUPFAM" id="SSF56112">
    <property type="entry name" value="Protein kinase-like (PK-like)"/>
    <property type="match status" value="1"/>
</dbReference>
<dbReference type="PROSITE" id="PS01351">
    <property type="entry name" value="MAPK"/>
    <property type="match status" value="1"/>
</dbReference>
<dbReference type="PROSITE" id="PS00107">
    <property type="entry name" value="PROTEIN_KINASE_ATP"/>
    <property type="match status" value="1"/>
</dbReference>
<dbReference type="PROSITE" id="PS50011">
    <property type="entry name" value="PROTEIN_KINASE_DOM"/>
    <property type="match status" value="1"/>
</dbReference>
<dbReference type="PROSITE" id="PS00108">
    <property type="entry name" value="PROTEIN_KINASE_ST"/>
    <property type="match status" value="1"/>
</dbReference>
<accession>D3ZSZ3</accession>
<reference key="1">
    <citation type="journal article" date="2004" name="Nature">
        <title>Genome sequence of the Brown Norway rat yields insights into mammalian evolution.</title>
        <authorList>
            <person name="Gibbs R.A."/>
            <person name="Weinstock G.M."/>
            <person name="Metzker M.L."/>
            <person name="Muzny D.M."/>
            <person name="Sodergren E.J."/>
            <person name="Scherer S."/>
            <person name="Scott G."/>
            <person name="Steffen D."/>
            <person name="Worley K.C."/>
            <person name="Burch P.E."/>
            <person name="Okwuonu G."/>
            <person name="Hines S."/>
            <person name="Lewis L."/>
            <person name="Deramo C."/>
            <person name="Delgado O."/>
            <person name="Dugan-Rocha S."/>
            <person name="Miner G."/>
            <person name="Morgan M."/>
            <person name="Hawes A."/>
            <person name="Gill R."/>
            <person name="Holt R.A."/>
            <person name="Adams M.D."/>
            <person name="Amanatides P.G."/>
            <person name="Baden-Tillson H."/>
            <person name="Barnstead M."/>
            <person name="Chin S."/>
            <person name="Evans C.A."/>
            <person name="Ferriera S."/>
            <person name="Fosler C."/>
            <person name="Glodek A."/>
            <person name="Gu Z."/>
            <person name="Jennings D."/>
            <person name="Kraft C.L."/>
            <person name="Nguyen T."/>
            <person name="Pfannkoch C.M."/>
            <person name="Sitter C."/>
            <person name="Sutton G.G."/>
            <person name="Venter J.C."/>
            <person name="Woodage T."/>
            <person name="Smith D."/>
            <person name="Lee H.-M."/>
            <person name="Gustafson E."/>
            <person name="Cahill P."/>
            <person name="Kana A."/>
            <person name="Doucette-Stamm L."/>
            <person name="Weinstock K."/>
            <person name="Fechtel K."/>
            <person name="Weiss R.B."/>
            <person name="Dunn D.M."/>
            <person name="Green E.D."/>
            <person name="Blakesley R.W."/>
            <person name="Bouffard G.G."/>
            <person name="De Jong P.J."/>
            <person name="Osoegawa K."/>
            <person name="Zhu B."/>
            <person name="Marra M."/>
            <person name="Schein J."/>
            <person name="Bosdet I."/>
            <person name="Fjell C."/>
            <person name="Jones S."/>
            <person name="Krzywinski M."/>
            <person name="Mathewson C."/>
            <person name="Siddiqui A."/>
            <person name="Wye N."/>
            <person name="McPherson J."/>
            <person name="Zhao S."/>
            <person name="Fraser C.M."/>
            <person name="Shetty J."/>
            <person name="Shatsman S."/>
            <person name="Geer K."/>
            <person name="Chen Y."/>
            <person name="Abramzon S."/>
            <person name="Nierman W.C."/>
            <person name="Havlak P.H."/>
            <person name="Chen R."/>
            <person name="Durbin K.J."/>
            <person name="Egan A."/>
            <person name="Ren Y."/>
            <person name="Song X.-Z."/>
            <person name="Li B."/>
            <person name="Liu Y."/>
            <person name="Qin X."/>
            <person name="Cawley S."/>
            <person name="Cooney A.J."/>
            <person name="D'Souza L.M."/>
            <person name="Martin K."/>
            <person name="Wu J.Q."/>
            <person name="Gonzalez-Garay M.L."/>
            <person name="Jackson A.R."/>
            <person name="Kalafus K.J."/>
            <person name="McLeod M.P."/>
            <person name="Milosavljevic A."/>
            <person name="Virk D."/>
            <person name="Volkov A."/>
            <person name="Wheeler D.A."/>
            <person name="Zhang Z."/>
            <person name="Bailey J.A."/>
            <person name="Eichler E.E."/>
            <person name="Tuzun E."/>
            <person name="Birney E."/>
            <person name="Mongin E."/>
            <person name="Ureta-Vidal A."/>
            <person name="Woodwark C."/>
            <person name="Zdobnov E."/>
            <person name="Bork P."/>
            <person name="Suyama M."/>
            <person name="Torrents D."/>
            <person name="Alexandersson M."/>
            <person name="Trask B.J."/>
            <person name="Young J.M."/>
            <person name="Huang H."/>
            <person name="Wang H."/>
            <person name="Xing H."/>
            <person name="Daniels S."/>
            <person name="Gietzen D."/>
            <person name="Schmidt J."/>
            <person name="Stevens K."/>
            <person name="Vitt U."/>
            <person name="Wingrove J."/>
            <person name="Camara F."/>
            <person name="Mar Alba M."/>
            <person name="Abril J.F."/>
            <person name="Guigo R."/>
            <person name="Smit A."/>
            <person name="Dubchak I."/>
            <person name="Rubin E.M."/>
            <person name="Couronne O."/>
            <person name="Poliakov A."/>
            <person name="Huebner N."/>
            <person name="Ganten D."/>
            <person name="Goesele C."/>
            <person name="Hummel O."/>
            <person name="Kreitler T."/>
            <person name="Lee Y.-A."/>
            <person name="Monti J."/>
            <person name="Schulz H."/>
            <person name="Zimdahl H."/>
            <person name="Himmelbauer H."/>
            <person name="Lehrach H."/>
            <person name="Jacob H.J."/>
            <person name="Bromberg S."/>
            <person name="Gullings-Handley J."/>
            <person name="Jensen-Seaman M.I."/>
            <person name="Kwitek A.E."/>
            <person name="Lazar J."/>
            <person name="Pasko D."/>
            <person name="Tonellato P.J."/>
            <person name="Twigger S."/>
            <person name="Ponting C.P."/>
            <person name="Duarte J.M."/>
            <person name="Rice S."/>
            <person name="Goodstadt L."/>
            <person name="Beatson S.A."/>
            <person name="Emes R.D."/>
            <person name="Winter E.E."/>
            <person name="Webber C."/>
            <person name="Brandt P."/>
            <person name="Nyakatura G."/>
            <person name="Adetobi M."/>
            <person name="Chiaromonte F."/>
            <person name="Elnitski L."/>
            <person name="Eswara P."/>
            <person name="Hardison R.C."/>
            <person name="Hou M."/>
            <person name="Kolbe D."/>
            <person name="Makova K."/>
            <person name="Miller W."/>
            <person name="Nekrutenko A."/>
            <person name="Riemer C."/>
            <person name="Schwartz S."/>
            <person name="Taylor J."/>
            <person name="Yang S."/>
            <person name="Zhang Y."/>
            <person name="Lindpaintner K."/>
            <person name="Andrews T.D."/>
            <person name="Caccamo M."/>
            <person name="Clamp M."/>
            <person name="Clarke L."/>
            <person name="Curwen V."/>
            <person name="Durbin R.M."/>
            <person name="Eyras E."/>
            <person name="Searle S.M."/>
            <person name="Cooper G.M."/>
            <person name="Batzoglou S."/>
            <person name="Brudno M."/>
            <person name="Sidow A."/>
            <person name="Stone E.A."/>
            <person name="Payseur B.A."/>
            <person name="Bourque G."/>
            <person name="Lopez-Otin C."/>
            <person name="Puente X.S."/>
            <person name="Chakrabarti K."/>
            <person name="Chatterji S."/>
            <person name="Dewey C."/>
            <person name="Pachter L."/>
            <person name="Bray N."/>
            <person name="Yap V.B."/>
            <person name="Caspi A."/>
            <person name="Tesler G."/>
            <person name="Pevzner P.A."/>
            <person name="Haussler D."/>
            <person name="Roskin K.M."/>
            <person name="Baertsch R."/>
            <person name="Clawson H."/>
            <person name="Furey T.S."/>
            <person name="Hinrichs A.S."/>
            <person name="Karolchik D."/>
            <person name="Kent W.J."/>
            <person name="Rosenbloom K.R."/>
            <person name="Trumbower H."/>
            <person name="Weirauch M."/>
            <person name="Cooper D.N."/>
            <person name="Stenson P.D."/>
            <person name="Ma B."/>
            <person name="Brent M."/>
            <person name="Arumugam M."/>
            <person name="Shteynberg D."/>
            <person name="Copley R.R."/>
            <person name="Taylor M.S."/>
            <person name="Riethman H."/>
            <person name="Mudunuri U."/>
            <person name="Peterson J."/>
            <person name="Guyer M."/>
            <person name="Felsenfeld A."/>
            <person name="Old S."/>
            <person name="Mockrin S."/>
            <person name="Collins F.S."/>
        </authorList>
    </citation>
    <scope>NUCLEOTIDE SEQUENCE [LARGE SCALE GENOMIC DNA]</scope>
    <source>
        <strain>Brown Norway</strain>
    </source>
</reference>
<sequence>MSLCGTRANAKMMAAYNGGTSAAAAGHHHHHHHHLPHLPPPHLHHHHHPQHHLHPGSAAAVHPVQQHTSSAAAAAAAAAAAAAMLNPGQQQPYFPSPAPGQAPGPAAAAPAQVQAAAAATVKAHHHQHSHHPQQQLDIEPDRPIGYGAFGVVWSVTDPRDGKRVALKKMPNVFQNLVSCKRVFRELKMLCFFKHDNVLSALDILQPPHIDYFEEIYVVTELMQSDLHKIIVSPQPLSSDHVKVFLYQILRGLKYLHSAGILHRDIKPGNLLVNSNCVLKICDFGLARVEELDESRHMTQEVVTQYYRAPEILMGSRHYSNAIDIWSVGCIFAELLGRRILFQAQSPIQQLDLITDLLGTPSLEAMRTACEGAKAHILRGPHKQPSLPVLYTLSSQATHEAVHLLCRMLVFDPSKRISAKDALAHPYLDEGRLRYHTCMCKCCFSTSTGRVYTSDFEPVTNPKFDDTFEKNLSSVRQVKEIIHQFILEQQKGNRVPLCINPQSAAFKSFISSTVAQPSEMPPSPLVWE</sequence>
<name>NLK_RAT</name>
<feature type="chain" id="PRO_0000413531" description="Serine/threonine-protein kinase NLK">
    <location>
        <begin position="1"/>
        <end position="527"/>
    </location>
</feature>
<feature type="domain" description="Protein kinase" evidence="3">
    <location>
        <begin position="138"/>
        <end position="427"/>
    </location>
</feature>
<feature type="region of interest" description="Required for interaction with TAB2" evidence="1">
    <location>
        <begin position="1"/>
        <end position="304"/>
    </location>
</feature>
<feature type="region of interest" description="Sufficient for interaction with DAPK3" evidence="2">
    <location>
        <begin position="1"/>
        <end position="125"/>
    </location>
</feature>
<feature type="region of interest" description="Disordered" evidence="5">
    <location>
        <begin position="22"/>
        <end position="72"/>
    </location>
</feature>
<feature type="region of interest" description="Disordered" evidence="5">
    <location>
        <begin position="90"/>
        <end position="139"/>
    </location>
</feature>
<feature type="region of interest" description="Sufficient for interaction with DAPK3" evidence="2">
    <location>
        <begin position="124"/>
        <end position="416"/>
    </location>
</feature>
<feature type="region of interest" description="Required for homodimerization and kinase activation and localization to the nucleus" evidence="1">
    <location>
        <begin position="428"/>
        <end position="527"/>
    </location>
</feature>
<feature type="region of interest" description="Required for interaction with TAB2" evidence="1">
    <location>
        <begin position="434"/>
        <end position="527"/>
    </location>
</feature>
<feature type="short sequence motif" description="TQE">
    <location>
        <begin position="298"/>
        <end position="300"/>
    </location>
</feature>
<feature type="compositionally biased region" description="Basic residues" evidence="5">
    <location>
        <begin position="26"/>
        <end position="54"/>
    </location>
</feature>
<feature type="compositionally biased region" description="Low complexity" evidence="5">
    <location>
        <begin position="103"/>
        <end position="119"/>
    </location>
</feature>
<feature type="compositionally biased region" description="Basic residues" evidence="5">
    <location>
        <begin position="122"/>
        <end position="131"/>
    </location>
</feature>
<feature type="active site" description="Proton acceptor" evidence="3 4">
    <location>
        <position position="264"/>
    </location>
</feature>
<feature type="binding site" evidence="3">
    <location>
        <begin position="144"/>
        <end position="152"/>
    </location>
    <ligand>
        <name>ATP</name>
        <dbReference type="ChEBI" id="CHEBI:30616"/>
    </ligand>
</feature>
<feature type="binding site" evidence="3">
    <location>
        <position position="167"/>
    </location>
    <ligand>
        <name>ATP</name>
        <dbReference type="ChEBI" id="CHEBI:30616"/>
    </ligand>
</feature>
<feature type="modified residue" description="Phosphothreonine" evidence="2">
    <location>
        <position position="298"/>
    </location>
</feature>
<feature type="modified residue" description="Phosphoserine" evidence="2">
    <location>
        <position position="522"/>
    </location>
</feature>